<accession>Q8U1G7</accession>
<protein>
    <recommendedName>
        <fullName evidence="1">Uracil phosphoribosyltransferase</fullName>
        <ecNumber evidence="1">2.4.2.9</ecNumber>
    </recommendedName>
    <alternativeName>
        <fullName evidence="1">UMP pyrophosphorylase</fullName>
    </alternativeName>
    <alternativeName>
        <fullName evidence="1">UPRTase</fullName>
    </alternativeName>
</protein>
<reference key="1">
    <citation type="journal article" date="1999" name="Genetics">
        <title>Divergence of the hyperthermophilic archaea Pyrococcus furiosus and P. horikoshii inferred from complete genomic sequences.</title>
        <authorList>
            <person name="Maeder D.L."/>
            <person name="Weiss R.B."/>
            <person name="Dunn D.M."/>
            <person name="Cherry J.L."/>
            <person name="Gonzalez J.M."/>
            <person name="DiRuggiero J."/>
            <person name="Robb F.T."/>
        </authorList>
    </citation>
    <scope>NUCLEOTIDE SEQUENCE [LARGE SCALE GENOMIC DNA]</scope>
    <source>
        <strain>ATCC 43587 / DSM 3638 / JCM 8422 / Vc1</strain>
    </source>
</reference>
<sequence length="232" mass="26164">MIEDKRWGGVYSFEDSPYIMEILTELRDKDTDSIKFRKGLVKLGRYMGYEITKTMDVEKVKVETPLEETEGIIVKDRRNVVIITVLRAAIPFMEGLIKVFEHARVGIVSAARGKPPKFEIEMNYIKIPQITPEDTVIVADPMIATGSTLLRVLEEVKKYGTPKRTLVVGVLAAPEGITRIKEKFPEVEIFVAKIDRELNDKGYILPGLGDAGDRAFGEPVKITTLPQVHYIE</sequence>
<comment type="function">
    <text evidence="1">Catalyzes the conversion of uracil and 5-phospho-alpha-D-ribose 1-diphosphate (PRPP) to UMP and diphosphate.</text>
</comment>
<comment type="catalytic activity">
    <reaction evidence="1">
        <text>UMP + diphosphate = 5-phospho-alpha-D-ribose 1-diphosphate + uracil</text>
        <dbReference type="Rhea" id="RHEA:13017"/>
        <dbReference type="ChEBI" id="CHEBI:17568"/>
        <dbReference type="ChEBI" id="CHEBI:33019"/>
        <dbReference type="ChEBI" id="CHEBI:57865"/>
        <dbReference type="ChEBI" id="CHEBI:58017"/>
        <dbReference type="EC" id="2.4.2.9"/>
    </reaction>
</comment>
<comment type="cofactor">
    <cofactor evidence="1">
        <name>Mg(2+)</name>
        <dbReference type="ChEBI" id="CHEBI:18420"/>
    </cofactor>
    <text evidence="1">Binds 1 Mg(2+) ion per subunit. The magnesium is bound as Mg-PRPP.</text>
</comment>
<comment type="activity regulation">
    <text evidence="1">Allosterically activated by GTP.</text>
</comment>
<comment type="pathway">
    <text evidence="1">Pyrimidine metabolism; UMP biosynthesis via salvage pathway; UMP from uracil: step 1/1.</text>
</comment>
<comment type="similarity">
    <text evidence="1">Belongs to the UPRTase family.</text>
</comment>
<organism>
    <name type="scientific">Pyrococcus furiosus (strain ATCC 43587 / DSM 3638 / JCM 8422 / Vc1)</name>
    <dbReference type="NCBI Taxonomy" id="186497"/>
    <lineage>
        <taxon>Archaea</taxon>
        <taxon>Methanobacteriati</taxon>
        <taxon>Methanobacteriota</taxon>
        <taxon>Thermococci</taxon>
        <taxon>Thermococcales</taxon>
        <taxon>Thermococcaceae</taxon>
        <taxon>Pyrococcus</taxon>
    </lineage>
</organism>
<dbReference type="EC" id="2.4.2.9" evidence="1"/>
<dbReference type="EMBL" id="AE009950">
    <property type="protein sequence ID" value="AAL81365.1"/>
    <property type="molecule type" value="Genomic_DNA"/>
</dbReference>
<dbReference type="RefSeq" id="WP_011012384.1">
    <property type="nucleotide sequence ID" value="NZ_CP023154.1"/>
</dbReference>
<dbReference type="SMR" id="Q8U1G7"/>
<dbReference type="STRING" id="186497.PF1241"/>
<dbReference type="PaxDb" id="186497-PF1241"/>
<dbReference type="GeneID" id="41713046"/>
<dbReference type="KEGG" id="pfu:PF1241"/>
<dbReference type="PATRIC" id="fig|186497.12.peg.1303"/>
<dbReference type="eggNOG" id="arCOG04128">
    <property type="taxonomic scope" value="Archaea"/>
</dbReference>
<dbReference type="HOGENOM" id="CLU_067096_2_0_2"/>
<dbReference type="OrthoDB" id="80352at2157"/>
<dbReference type="PhylomeDB" id="Q8U1G7"/>
<dbReference type="UniPathway" id="UPA00574">
    <property type="reaction ID" value="UER00636"/>
</dbReference>
<dbReference type="Proteomes" id="UP000001013">
    <property type="component" value="Chromosome"/>
</dbReference>
<dbReference type="GO" id="GO:0005525">
    <property type="term" value="F:GTP binding"/>
    <property type="evidence" value="ECO:0007669"/>
    <property type="project" value="UniProtKB-KW"/>
</dbReference>
<dbReference type="GO" id="GO:0000287">
    <property type="term" value="F:magnesium ion binding"/>
    <property type="evidence" value="ECO:0007669"/>
    <property type="project" value="UniProtKB-UniRule"/>
</dbReference>
<dbReference type="GO" id="GO:0004845">
    <property type="term" value="F:uracil phosphoribosyltransferase activity"/>
    <property type="evidence" value="ECO:0007669"/>
    <property type="project" value="UniProtKB-UniRule"/>
</dbReference>
<dbReference type="GO" id="GO:0044206">
    <property type="term" value="P:UMP salvage"/>
    <property type="evidence" value="ECO:0007669"/>
    <property type="project" value="UniProtKB-UniRule"/>
</dbReference>
<dbReference type="GO" id="GO:0006223">
    <property type="term" value="P:uracil salvage"/>
    <property type="evidence" value="ECO:0007669"/>
    <property type="project" value="InterPro"/>
</dbReference>
<dbReference type="CDD" id="cd06223">
    <property type="entry name" value="PRTases_typeI"/>
    <property type="match status" value="1"/>
</dbReference>
<dbReference type="FunFam" id="3.40.50.2020:FF:000023">
    <property type="entry name" value="Probable uracil phosphoribosyltransferase"/>
    <property type="match status" value="1"/>
</dbReference>
<dbReference type="Gene3D" id="3.40.50.2020">
    <property type="match status" value="1"/>
</dbReference>
<dbReference type="HAMAP" id="MF_01218_A">
    <property type="entry name" value="Upp_A"/>
    <property type="match status" value="1"/>
</dbReference>
<dbReference type="InterPro" id="IPR000836">
    <property type="entry name" value="PRibTrfase_dom"/>
</dbReference>
<dbReference type="InterPro" id="IPR029057">
    <property type="entry name" value="PRTase-like"/>
</dbReference>
<dbReference type="InterPro" id="IPR034331">
    <property type="entry name" value="Upp_A"/>
</dbReference>
<dbReference type="InterPro" id="IPR050054">
    <property type="entry name" value="UPRTase/APRTase"/>
</dbReference>
<dbReference type="InterPro" id="IPR005765">
    <property type="entry name" value="Ura_phspho_trans"/>
</dbReference>
<dbReference type="NCBIfam" id="NF001097">
    <property type="entry name" value="PRK00129.1"/>
    <property type="match status" value="1"/>
</dbReference>
<dbReference type="NCBIfam" id="TIGR01091">
    <property type="entry name" value="upp"/>
    <property type="match status" value="1"/>
</dbReference>
<dbReference type="PANTHER" id="PTHR32315">
    <property type="entry name" value="ADENINE PHOSPHORIBOSYLTRANSFERASE"/>
    <property type="match status" value="1"/>
</dbReference>
<dbReference type="PANTHER" id="PTHR32315:SF4">
    <property type="entry name" value="URACIL PHOSPHORIBOSYLTRANSFERASE, CHLOROPLASTIC"/>
    <property type="match status" value="1"/>
</dbReference>
<dbReference type="Pfam" id="PF14681">
    <property type="entry name" value="UPRTase"/>
    <property type="match status" value="1"/>
</dbReference>
<dbReference type="SUPFAM" id="SSF53271">
    <property type="entry name" value="PRTase-like"/>
    <property type="match status" value="1"/>
</dbReference>
<proteinExistence type="inferred from homology"/>
<evidence type="ECO:0000255" key="1">
    <source>
        <dbReference type="HAMAP-Rule" id="MF_01218"/>
    </source>
</evidence>
<keyword id="KW-0021">Allosteric enzyme</keyword>
<keyword id="KW-0328">Glycosyltransferase</keyword>
<keyword id="KW-0342">GTP-binding</keyword>
<keyword id="KW-0460">Magnesium</keyword>
<keyword id="KW-0547">Nucleotide-binding</keyword>
<keyword id="KW-1185">Reference proteome</keyword>
<keyword id="KW-0808">Transferase</keyword>
<feature type="chain" id="PRO_0000120924" description="Uracil phosphoribosyltransferase">
    <location>
        <begin position="1"/>
        <end position="232"/>
    </location>
</feature>
<feature type="binding site" evidence="1">
    <location>
        <begin position="38"/>
        <end position="42"/>
    </location>
    <ligand>
        <name>GTP</name>
        <dbReference type="ChEBI" id="CHEBI:37565"/>
    </ligand>
</feature>
<feature type="binding site" evidence="1">
    <location>
        <position position="87"/>
    </location>
    <ligand>
        <name>5-phospho-alpha-D-ribose 1-diphosphate</name>
        <dbReference type="ChEBI" id="CHEBI:58017"/>
    </ligand>
</feature>
<feature type="binding site" evidence="1">
    <location>
        <position position="112"/>
    </location>
    <ligand>
        <name>5-phospho-alpha-D-ribose 1-diphosphate</name>
        <dbReference type="ChEBI" id="CHEBI:58017"/>
    </ligand>
</feature>
<feature type="binding site" evidence="1">
    <location>
        <begin position="140"/>
        <end position="148"/>
    </location>
    <ligand>
        <name>5-phospho-alpha-D-ribose 1-diphosphate</name>
        <dbReference type="ChEBI" id="CHEBI:58017"/>
    </ligand>
</feature>
<feature type="binding site" evidence="1">
    <location>
        <position position="204"/>
    </location>
    <ligand>
        <name>uracil</name>
        <dbReference type="ChEBI" id="CHEBI:17568"/>
    </ligand>
</feature>
<feature type="binding site" evidence="1">
    <location>
        <begin position="209"/>
        <end position="211"/>
    </location>
    <ligand>
        <name>uracil</name>
        <dbReference type="ChEBI" id="CHEBI:17568"/>
    </ligand>
</feature>
<feature type="binding site" evidence="1">
    <location>
        <position position="210"/>
    </location>
    <ligand>
        <name>5-phospho-alpha-D-ribose 1-diphosphate</name>
        <dbReference type="ChEBI" id="CHEBI:58017"/>
    </ligand>
</feature>
<gene>
    <name evidence="1" type="primary">upp</name>
    <name type="ordered locus">PF1241</name>
</gene>
<name>UPP_PYRFU</name>